<name>GLRA3_MOUSE</name>
<proteinExistence type="evidence at protein level"/>
<accession>Q91XP5</accession>
<accession>Q7TSQ2</accession>
<evidence type="ECO:0000250" key="1">
    <source>
        <dbReference type="UniProtKB" id="O75311"/>
    </source>
</evidence>
<evidence type="ECO:0000250" key="2">
    <source>
        <dbReference type="UniProtKB" id="P23415"/>
    </source>
</evidence>
<evidence type="ECO:0000250" key="3">
    <source>
        <dbReference type="UniProtKB" id="P24524"/>
    </source>
</evidence>
<evidence type="ECO:0000255" key="4"/>
<evidence type="ECO:0000269" key="5">
    <source>
    </source>
</evidence>
<evidence type="ECO:0000269" key="6">
    <source>
    </source>
</evidence>
<evidence type="ECO:0000269" key="7">
    <source>
    </source>
</evidence>
<evidence type="ECO:0000269" key="8">
    <source>
    </source>
</evidence>
<evidence type="ECO:0000305" key="9"/>
<evidence type="ECO:0000305" key="10">
    <source>
    </source>
</evidence>
<evidence type="ECO:0000305" key="11">
    <source>
    </source>
</evidence>
<evidence type="ECO:0000305" key="12">
    <source>
    </source>
</evidence>
<evidence type="ECO:0007744" key="13">
    <source>
    </source>
</evidence>
<feature type="signal peptide" evidence="4">
    <location>
        <begin position="1"/>
        <end position="33"/>
    </location>
</feature>
<feature type="chain" id="PRO_0000000420" description="Glycine receptor subunit alpha-3">
    <location>
        <begin position="34"/>
        <end position="464"/>
    </location>
</feature>
<feature type="topological domain" description="Extracellular" evidence="1">
    <location>
        <begin position="34"/>
        <end position="255"/>
    </location>
</feature>
<feature type="transmembrane region" description="Helical; Name=1" evidence="1">
    <location>
        <begin position="256"/>
        <end position="277"/>
    </location>
</feature>
<feature type="topological domain" description="Cytoplasmic" evidence="1">
    <location>
        <begin position="278"/>
        <end position="282"/>
    </location>
</feature>
<feature type="transmembrane region" description="Helical; Name=2" evidence="1">
    <location>
        <begin position="283"/>
        <end position="303"/>
    </location>
</feature>
<feature type="topological domain" description="Extracellular" evidence="1">
    <location>
        <begin position="304"/>
        <end position="314"/>
    </location>
</feature>
<feature type="transmembrane region" description="Helical; Name=3" evidence="1">
    <location>
        <begin position="315"/>
        <end position="335"/>
    </location>
</feature>
<feature type="topological domain" description="Cytoplasmic" evidence="1">
    <location>
        <begin position="336"/>
        <end position="430"/>
    </location>
</feature>
<feature type="transmembrane region" description="Helical; Name=4" evidence="1">
    <location>
        <begin position="431"/>
        <end position="451"/>
    </location>
</feature>
<feature type="topological domain" description="Extracellular" evidence="1">
    <location>
        <begin position="452"/>
        <end position="464"/>
    </location>
</feature>
<feature type="binding site" evidence="2">
    <location>
        <position position="225"/>
    </location>
    <ligand>
        <name>Zn(2+)</name>
        <dbReference type="ChEBI" id="CHEBI:29105"/>
    </ligand>
</feature>
<feature type="binding site" evidence="2">
    <location>
        <position position="227"/>
    </location>
    <ligand>
        <name>Zn(2+)</name>
        <dbReference type="ChEBI" id="CHEBI:29105"/>
    </ligand>
</feature>
<feature type="binding site" evidence="1">
    <location>
        <begin position="235"/>
        <end position="240"/>
    </location>
    <ligand>
        <name>strychnine</name>
        <dbReference type="ChEBI" id="CHEBI:90700"/>
    </ligand>
</feature>
<feature type="binding site" evidence="2">
    <location>
        <position position="248"/>
    </location>
    <ligand>
        <name>Zn(2+)</name>
        <dbReference type="ChEBI" id="CHEBI:29105"/>
    </ligand>
</feature>
<feature type="site" description="Important for obstruction of the ion pore in the closed conformation" evidence="1">
    <location>
        <position position="294"/>
    </location>
</feature>
<feature type="modified residue" description="Phosphoserine" evidence="13">
    <location>
        <position position="370"/>
    </location>
</feature>
<feature type="modified residue" description="Phosphoserine; by PKA" evidence="8">
    <location>
        <position position="379"/>
    </location>
</feature>
<feature type="glycosylation site" description="N-linked (GlcNAc...) asparagine" evidence="4">
    <location>
        <position position="71"/>
    </location>
</feature>
<feature type="disulfide bond" evidence="1">
    <location>
        <begin position="171"/>
        <end position="185"/>
    </location>
</feature>
<feature type="disulfide bond" evidence="1">
    <location>
        <begin position="231"/>
        <end position="242"/>
    </location>
</feature>
<feature type="sequence conflict" description="In Ref. 1; AAK51962." evidence="9" ref="1">
    <location>
        <position position="110"/>
    </location>
</feature>
<feature type="sequence conflict" description="In Ref. 1; AAK51962." evidence="9" ref="1">
    <original>V</original>
    <variation>D</variation>
    <location>
        <position position="293"/>
    </location>
</feature>
<feature type="sequence conflict" description="In Ref. 1; AAK51962." evidence="9" ref="1">
    <original>Q</original>
    <variation>H</variation>
    <location>
        <position position="461"/>
    </location>
</feature>
<comment type="function">
    <text evidence="3 6 8">Glycine receptors are ligand-gated chloride channels. Channel opening is triggered by extracellular glycine (PubMed:15131310, PubMed:20978350). Channel characteristics depend on the subunit composition; heteropentameric channels display faster channel closure (By similarity). Plays an important role in the down-regulation of neuronal excitability. Contributes to the generation of inhibitory postsynaptic currents (PubMed:15131310). Contributes to increased pain perception in response to increased prostaglandin E2 levels (PubMed:15131310). Plays a role in the regulation of breathing rhythm, especially of the duration of the postinspiratory phase (PubMed:20978350). Plays a role in cellular responses to ethanol (By similarity).</text>
</comment>
<comment type="catalytic activity">
    <reaction evidence="6 8">
        <text>chloride(in) = chloride(out)</text>
        <dbReference type="Rhea" id="RHEA:29823"/>
        <dbReference type="ChEBI" id="CHEBI:17996"/>
    </reaction>
</comment>
<comment type="activity regulation">
    <text evidence="6">Inhibited by prostaglandin E2, probably via PKA-mediated phosphorylation at Ser-379 (PubMed:15131310).</text>
</comment>
<comment type="subunit">
    <text evidence="1 3">Homopentamer (in vitro) (By similarity). Heteropentamer composed of GLRA3 and GLRB. Both homopentamers and heteropentamers form functional ion channels, but their characteristics are subtly different (By similarity).</text>
</comment>
<comment type="subcellular location">
    <subcellularLocation>
        <location evidence="10 11 12">Postsynaptic cell membrane</location>
        <topology evidence="9">Multi-pass membrane protein</topology>
    </subcellularLocation>
    <subcellularLocation>
        <location evidence="5 6 7">Synapse</location>
    </subcellularLocation>
    <subcellularLocation>
        <location evidence="7">Perikaryon</location>
    </subcellularLocation>
    <subcellularLocation>
        <location evidence="3">Cell projection</location>
        <location evidence="3">Dendrite</location>
    </subcellularLocation>
    <subcellularLocation>
        <location evidence="8">Cell membrane</location>
        <topology evidence="9">Multi-pass membrane protein</topology>
    </subcellularLocation>
    <text evidence="6">Partially colocalizes with GPHN that is known to mediate receptor clustering at postsynaptic membranes.</text>
</comment>
<comment type="tissue specificity">
    <text evidence="5 6 7 8">Detected in brainstem, also in neurons that control rhythmic breathing (PubMed:20978350). Detected in superficial laminae of the dorsal horn of the thoracic spinal cord (PubMed:15131310). Detected in dentate gyrus in hippocampus, especially in stratum granulare (PubMed:19723286). Detected in the inner plexiform layer in the retina (at protein level) (PubMed:12975813). Detected in midbrain, thalamus, brain cortex, hippocampus, and at lower levels in cerebellum (PubMed:19723286).</text>
</comment>
<comment type="domain">
    <text evidence="1">The N-terminal domain carries structural determinants essential for agonist and antagonist binding. The channel pore is formed by pentameric assembly of the second transmembrane domain from all five subunits. The cytoplasmic loop is an important determinant of channel inactivation kinetics.</text>
</comment>
<comment type="PTM">
    <text evidence="3 8">Phosphorylated by PKA; this causes down-regulation of channel activity. Dephosphorylated in response to activation of HTR1A signaling; this increases channel activity (PubMed:20978350).</text>
</comment>
<comment type="disruption phenotype">
    <text evidence="6 8">Mutant mice are born at the expected Mendelian rate, appear normal and are fertile. They do not display notable alterations in motor coordination and startle response, or other neuromotor defects. Glycinergic postsynaptic inhibitory currents in spinal cord appear unchanged, but are not inhibited by prostaglandin E2, contrary to what is observed with wild-type. Basal nociception is unchanged, but contrary to wild-type, mutant mice do not display increased sensitivity to pain after prostaglandin E2 injection. Likewise, they show a more rapid decrease of the increased pain sensitivity caused by agents that cause local inflammation, such as subcutaneous zymosan injection (PubMed:15131310). Mutant mice display altered phrenic nerve activity, resulting in an irregular breathing rhythm that affects especially the duration of the postinspiratory phase. Contrary to wild-type, their respiratory rhythm is not accelerated by serotonin (PubMed:20978350).</text>
</comment>
<comment type="miscellaneous">
    <text evidence="1">The alpha subunit binds strychnine.</text>
</comment>
<comment type="similarity">
    <text evidence="9">Belongs to the ligand-gated ion channel (TC 1.A.9) family. Glycine receptor (TC 1.A.9.3) subfamily. GLRA3 sub-subfamily.</text>
</comment>
<keyword id="KW-1003">Cell membrane</keyword>
<keyword id="KW-0966">Cell projection</keyword>
<keyword id="KW-0868">Chloride</keyword>
<keyword id="KW-0869">Chloride channel</keyword>
<keyword id="KW-1015">Disulfide bond</keyword>
<keyword id="KW-0325">Glycoprotein</keyword>
<keyword id="KW-0407">Ion channel</keyword>
<keyword id="KW-0406">Ion transport</keyword>
<keyword id="KW-1071">Ligand-gated ion channel</keyword>
<keyword id="KW-0472">Membrane</keyword>
<keyword id="KW-0479">Metal-binding</keyword>
<keyword id="KW-0597">Phosphoprotein</keyword>
<keyword id="KW-0628">Postsynaptic cell membrane</keyword>
<keyword id="KW-0675">Receptor</keyword>
<keyword id="KW-1185">Reference proteome</keyword>
<keyword id="KW-0732">Signal</keyword>
<keyword id="KW-0770">Synapse</keyword>
<keyword id="KW-0812">Transmembrane</keyword>
<keyword id="KW-1133">Transmembrane helix</keyword>
<keyword id="KW-0813">Transport</keyword>
<keyword id="KW-0862">Zinc</keyword>
<sequence>MAHVRHFRTLVSGFYFWEAALLLSLVATKETNSARSRSAPMSPSDFLDKLMGRTSGYDARIRPNFKGPPVNVTCNIFINSFGSIAETTMDYRVNIFLRQKWNDPRLAYSEYPDDSLDLDPSMLDSIWKPDLFFANEKGANFHEVTTDNKLLRIFKNGNVLYSIRLTLTLSCPMDLKNFPMDVQTCIMQLESFGYTMNDLIFEWQDEAPVQVAEGLTLPQFLLKEEKDLRYCTKHYNTGKFTCIEVRFHLERQMGYYLIQMYIPSLLIVILSWVSFWINMDAAPARVALGITTVLTMTTQSSGSRASLPKVSYVKAIDIWMAVCLLFVFSALLEYAAVNFVSRQHKELLRFRRKRKNKTEAFALEKFYRFSDTDDEVRESRFSFTAYGMGPCLQAKDGVVPKGPNHAVQVMPKSPDEMRKVFIDRAKKIDTISRACFPLAFLIFNIFYWVIYKILRHEDIHQQQD</sequence>
<dbReference type="EMBL" id="AF362764">
    <property type="protein sequence ID" value="AAK51962.1"/>
    <property type="molecule type" value="mRNA"/>
</dbReference>
<dbReference type="EMBL" id="AY230204">
    <property type="protein sequence ID" value="AAP22967.1"/>
    <property type="molecule type" value="mRNA"/>
</dbReference>
<dbReference type="CCDS" id="CCDS40340.1"/>
<dbReference type="RefSeq" id="NP_536686.3">
    <property type="nucleotide sequence ID" value="NM_080438.4"/>
</dbReference>
<dbReference type="SMR" id="Q91XP5"/>
<dbReference type="FunCoup" id="Q91XP5">
    <property type="interactions" value="628"/>
</dbReference>
<dbReference type="STRING" id="10090.ENSMUSP00000000275"/>
<dbReference type="BindingDB" id="Q91XP5"/>
<dbReference type="ChEMBL" id="CHEMBL4295912"/>
<dbReference type="GlyCosmos" id="Q91XP5">
    <property type="glycosylation" value="1 site, No reported glycans"/>
</dbReference>
<dbReference type="GlyGen" id="Q91XP5">
    <property type="glycosylation" value="1 site"/>
</dbReference>
<dbReference type="iPTMnet" id="Q91XP5"/>
<dbReference type="PhosphoSitePlus" id="Q91XP5"/>
<dbReference type="PaxDb" id="10090-ENSMUSP00000000275"/>
<dbReference type="ProteomicsDB" id="271394"/>
<dbReference type="ABCD" id="Q91XP5">
    <property type="antibodies" value="1 sequenced antibody"/>
</dbReference>
<dbReference type="Antibodypedia" id="28583">
    <property type="antibodies" value="99 antibodies from 22 providers"/>
</dbReference>
<dbReference type="DNASU" id="110304"/>
<dbReference type="Ensembl" id="ENSMUST00000000275.10">
    <property type="protein sequence ID" value="ENSMUSP00000000275.9"/>
    <property type="gene ID" value="ENSMUSG00000038257.11"/>
</dbReference>
<dbReference type="GeneID" id="110304"/>
<dbReference type="KEGG" id="mmu:110304"/>
<dbReference type="AGR" id="MGI:95749"/>
<dbReference type="CTD" id="8001"/>
<dbReference type="MGI" id="MGI:95749">
    <property type="gene designation" value="Glra3"/>
</dbReference>
<dbReference type="VEuPathDB" id="HostDB:ENSMUSG00000038257"/>
<dbReference type="eggNOG" id="KOG3644">
    <property type="taxonomic scope" value="Eukaryota"/>
</dbReference>
<dbReference type="GeneTree" id="ENSGT00940000158368"/>
<dbReference type="InParanoid" id="Q91XP5"/>
<dbReference type="OMA" id="VMPKNPD"/>
<dbReference type="OrthoDB" id="407674at2759"/>
<dbReference type="PhylomeDB" id="Q91XP5"/>
<dbReference type="Reactome" id="R-MMU-112314">
    <property type="pathway name" value="Neurotransmitter receptors and postsynaptic signal transmission"/>
</dbReference>
<dbReference type="BioGRID-ORCS" id="110304">
    <property type="hits" value="3 hits in 77 CRISPR screens"/>
</dbReference>
<dbReference type="ChiTaRS" id="Glra3">
    <property type="organism name" value="mouse"/>
</dbReference>
<dbReference type="PRO" id="PR:Q91XP5"/>
<dbReference type="Proteomes" id="UP000000589">
    <property type="component" value="Chromosome 8"/>
</dbReference>
<dbReference type="RNAct" id="Q91XP5">
    <property type="molecule type" value="protein"/>
</dbReference>
<dbReference type="Bgee" id="ENSMUSG00000038257">
    <property type="expression patterns" value="Expressed in substantia nigra and 55 other cell types or tissues"/>
</dbReference>
<dbReference type="ExpressionAtlas" id="Q91XP5">
    <property type="expression patterns" value="baseline and differential"/>
</dbReference>
<dbReference type="GO" id="GO:0030425">
    <property type="term" value="C:dendrite"/>
    <property type="evidence" value="ECO:0000315"/>
    <property type="project" value="MGI"/>
</dbReference>
<dbReference type="GO" id="GO:0098982">
    <property type="term" value="C:GABA-ergic synapse"/>
    <property type="evidence" value="ECO:0000316"/>
    <property type="project" value="MGI"/>
</dbReference>
<dbReference type="GO" id="GO:0098978">
    <property type="term" value="C:glutamatergic synapse"/>
    <property type="evidence" value="ECO:0000315"/>
    <property type="project" value="MGI"/>
</dbReference>
<dbReference type="GO" id="GO:0016935">
    <property type="term" value="C:glycine-gated chloride channel complex"/>
    <property type="evidence" value="ECO:0000250"/>
    <property type="project" value="UniProtKB"/>
</dbReference>
<dbReference type="GO" id="GO:0098690">
    <property type="term" value="C:glycinergic synapse"/>
    <property type="evidence" value="ECO:0000314"/>
    <property type="project" value="SynGO"/>
</dbReference>
<dbReference type="GO" id="GO:0043231">
    <property type="term" value="C:intracellular membrane-bounded organelle"/>
    <property type="evidence" value="ECO:0007669"/>
    <property type="project" value="Ensembl"/>
</dbReference>
<dbReference type="GO" id="GO:0043204">
    <property type="term" value="C:perikaryon"/>
    <property type="evidence" value="ECO:0007669"/>
    <property type="project" value="UniProtKB-SubCell"/>
</dbReference>
<dbReference type="GO" id="GO:0005886">
    <property type="term" value="C:plasma membrane"/>
    <property type="evidence" value="ECO:0000250"/>
    <property type="project" value="UniProtKB"/>
</dbReference>
<dbReference type="GO" id="GO:0045211">
    <property type="term" value="C:postsynaptic membrane"/>
    <property type="evidence" value="ECO:0007669"/>
    <property type="project" value="UniProtKB-SubCell"/>
</dbReference>
<dbReference type="GO" id="GO:0042734">
    <property type="term" value="C:presynaptic membrane"/>
    <property type="evidence" value="ECO:0000314"/>
    <property type="project" value="SynGO"/>
</dbReference>
<dbReference type="GO" id="GO:0016934">
    <property type="term" value="F:extracellularly glycine-gated chloride channel activity"/>
    <property type="evidence" value="ECO:0007669"/>
    <property type="project" value="Ensembl"/>
</dbReference>
<dbReference type="GO" id="GO:0016594">
    <property type="term" value="F:glycine binding"/>
    <property type="evidence" value="ECO:0007669"/>
    <property type="project" value="InterPro"/>
</dbReference>
<dbReference type="GO" id="GO:0022852">
    <property type="term" value="F:glycine-gated chloride ion channel activity"/>
    <property type="evidence" value="ECO:0000250"/>
    <property type="project" value="UniProtKB"/>
</dbReference>
<dbReference type="GO" id="GO:0046872">
    <property type="term" value="F:metal ion binding"/>
    <property type="evidence" value="ECO:0007669"/>
    <property type="project" value="UniProtKB-KW"/>
</dbReference>
<dbReference type="GO" id="GO:0004888">
    <property type="term" value="F:transmembrane signaling receptor activity"/>
    <property type="evidence" value="ECO:0007669"/>
    <property type="project" value="InterPro"/>
</dbReference>
<dbReference type="GO" id="GO:1902476">
    <property type="term" value="P:chloride transmembrane transport"/>
    <property type="evidence" value="ECO:0000250"/>
    <property type="project" value="UniProtKB"/>
</dbReference>
<dbReference type="GO" id="GO:0097688">
    <property type="term" value="P:glutamate receptor clustering"/>
    <property type="evidence" value="ECO:0000315"/>
    <property type="project" value="MGI"/>
</dbReference>
<dbReference type="GO" id="GO:0099171">
    <property type="term" value="P:presynaptic modulation of chemical synaptic transmission"/>
    <property type="evidence" value="ECO:0000314"/>
    <property type="project" value="SynGO"/>
</dbReference>
<dbReference type="GO" id="GO:0051260">
    <property type="term" value="P:protein homooligomerization"/>
    <property type="evidence" value="ECO:0007669"/>
    <property type="project" value="Ensembl"/>
</dbReference>
<dbReference type="CDD" id="cd19009">
    <property type="entry name" value="LGIC_ECD_GlyR_alpha"/>
    <property type="match status" value="1"/>
</dbReference>
<dbReference type="CDD" id="cd19060">
    <property type="entry name" value="LGIC_TM_GlyR_alpha"/>
    <property type="match status" value="1"/>
</dbReference>
<dbReference type="FunFam" id="2.70.170.10:FF:000002">
    <property type="entry name" value="Glycine receptor alpha 1 subunit"/>
    <property type="match status" value="1"/>
</dbReference>
<dbReference type="FunFam" id="1.20.58.390:FF:000003">
    <property type="entry name" value="Glycine receptor alpha 2 subunit"/>
    <property type="match status" value="1"/>
</dbReference>
<dbReference type="Gene3D" id="2.70.170.10">
    <property type="entry name" value="Neurotransmitter-gated ion-channel ligand-binding domain"/>
    <property type="match status" value="1"/>
</dbReference>
<dbReference type="Gene3D" id="1.20.58.390">
    <property type="entry name" value="Neurotransmitter-gated ion-channel transmembrane domain"/>
    <property type="match status" value="1"/>
</dbReference>
<dbReference type="InterPro" id="IPR006028">
    <property type="entry name" value="GABAA/Glycine_rcpt"/>
</dbReference>
<dbReference type="InterPro" id="IPR008127">
    <property type="entry name" value="Glycine_rcpt_A"/>
</dbReference>
<dbReference type="InterPro" id="IPR008130">
    <property type="entry name" value="Glycine_rcpt_A3"/>
</dbReference>
<dbReference type="InterPro" id="IPR006202">
    <property type="entry name" value="Neur_chan_lig-bd"/>
</dbReference>
<dbReference type="InterPro" id="IPR036734">
    <property type="entry name" value="Neur_chan_lig-bd_sf"/>
</dbReference>
<dbReference type="InterPro" id="IPR006201">
    <property type="entry name" value="Neur_channel"/>
</dbReference>
<dbReference type="InterPro" id="IPR036719">
    <property type="entry name" value="Neuro-gated_channel_TM_sf"/>
</dbReference>
<dbReference type="InterPro" id="IPR038050">
    <property type="entry name" value="Neuro_actylchol_rec"/>
</dbReference>
<dbReference type="InterPro" id="IPR006029">
    <property type="entry name" value="Neurotrans-gated_channel_TM"/>
</dbReference>
<dbReference type="InterPro" id="IPR018000">
    <property type="entry name" value="Neurotransmitter_ion_chnl_CS"/>
</dbReference>
<dbReference type="NCBIfam" id="TIGR00860">
    <property type="entry name" value="LIC"/>
    <property type="match status" value="1"/>
</dbReference>
<dbReference type="PANTHER" id="PTHR18945">
    <property type="entry name" value="NEUROTRANSMITTER GATED ION CHANNEL"/>
    <property type="match status" value="1"/>
</dbReference>
<dbReference type="Pfam" id="PF02931">
    <property type="entry name" value="Neur_chan_LBD"/>
    <property type="match status" value="1"/>
</dbReference>
<dbReference type="Pfam" id="PF02932">
    <property type="entry name" value="Neur_chan_memb"/>
    <property type="match status" value="1"/>
</dbReference>
<dbReference type="PRINTS" id="PR00253">
    <property type="entry name" value="GABAARECEPTR"/>
</dbReference>
<dbReference type="PRINTS" id="PR01673">
    <property type="entry name" value="GLYRALPHA"/>
</dbReference>
<dbReference type="PRINTS" id="PR01676">
    <property type="entry name" value="GLYRALPHA3"/>
</dbReference>
<dbReference type="PRINTS" id="PR00252">
    <property type="entry name" value="NRIONCHANNEL"/>
</dbReference>
<dbReference type="SUPFAM" id="SSF90112">
    <property type="entry name" value="Neurotransmitter-gated ion-channel transmembrane pore"/>
    <property type="match status" value="1"/>
</dbReference>
<dbReference type="SUPFAM" id="SSF63712">
    <property type="entry name" value="Nicotinic receptor ligand binding domain-like"/>
    <property type="match status" value="1"/>
</dbReference>
<dbReference type="PROSITE" id="PS00236">
    <property type="entry name" value="NEUROTR_ION_CHANNEL"/>
    <property type="match status" value="1"/>
</dbReference>
<reference key="1">
    <citation type="submission" date="2001-03" db="EMBL/GenBank/DDBJ databases">
        <title>Different glycine receptor isoforms are expressed in murine cerebellum.</title>
        <authorList>
            <person name="Noegel S."/>
            <person name="Becker C."/>
            <person name="Becker K."/>
        </authorList>
    </citation>
    <scope>NUCLEOTIDE SEQUENCE [MRNA]</scope>
    <source>
        <strain>C57BL/6J</strain>
        <tissue>Spinal cord</tissue>
    </source>
</reference>
<reference key="2">
    <citation type="journal article" date="2003" name="J. Comp. Neurol.">
        <title>Diversity of glycine receptors in the mouse retina: localization of the alpha3 subunit.</title>
        <authorList>
            <person name="Haverkamp S."/>
            <person name="Mueller U."/>
            <person name="Harvey K."/>
            <person name="Harvey R.J."/>
            <person name="Betz H."/>
            <person name="Waessle H."/>
        </authorList>
    </citation>
    <scope>NUCLEOTIDE SEQUENCE [MRNA]</scope>
    <scope>SUBCELLULAR LOCATION</scope>
    <scope>TISSUE SPECIFICITY</scope>
    <source>
        <strain>C57BL/6J</strain>
    </source>
</reference>
<reference key="3">
    <citation type="journal article" date="2004" name="Science">
        <title>GlyR alpha3: an essential target for spinal PGE2-mediated inflammatory pain sensitization.</title>
        <authorList>
            <person name="Harvey R.J."/>
            <person name="Depner U.B."/>
            <person name="Waessle H."/>
            <person name="Ahmadi S."/>
            <person name="Heindl C."/>
            <person name="Reinold H."/>
            <person name="Smart T.G."/>
            <person name="Harvey K."/>
            <person name="Schuetz B."/>
            <person name="Abo-Salem O.M."/>
            <person name="Zimmer A."/>
            <person name="Poisbeau P."/>
            <person name="Welzl H."/>
            <person name="Wolfer D.P."/>
            <person name="Betz H."/>
            <person name="Zeilhofer H.U."/>
            <person name="Mueller U."/>
        </authorList>
    </citation>
    <scope>FUNCTION</scope>
    <scope>TRANSPORTER ACTIVITY</scope>
    <scope>DISRUPTION PHENOTYPE</scope>
    <scope>TISSUE SPECIFICITY</scope>
    <scope>ACTIVITY REGULATION</scope>
</reference>
<reference key="4">
    <citation type="journal article" date="2009" name="Eur. J. Neurosci.">
        <title>Splice-specific roles of glycine receptor alpha3 in the hippocampus.</title>
        <authorList>
            <person name="Eichler S.A."/>
            <person name="Foerstera B."/>
            <person name="Smolinsky B."/>
            <person name="Juettner R."/>
            <person name="Lehmann T.N."/>
            <person name="Faehling M."/>
            <person name="Schwarz G."/>
            <person name="Legendre P."/>
            <person name="Meier J.C."/>
        </authorList>
    </citation>
    <scope>SUBCELLULAR LOCATION</scope>
    <scope>TISSUE SPECIFICITY</scope>
</reference>
<reference key="5">
    <citation type="journal article" date="2010" name="Cell">
        <title>A tissue-specific atlas of mouse protein phosphorylation and expression.</title>
        <authorList>
            <person name="Huttlin E.L."/>
            <person name="Jedrychowski M.P."/>
            <person name="Elias J.E."/>
            <person name="Goswami T."/>
            <person name="Rad R."/>
            <person name="Beausoleil S.A."/>
            <person name="Villen J."/>
            <person name="Haas W."/>
            <person name="Sowa M.E."/>
            <person name="Gygi S.P."/>
        </authorList>
    </citation>
    <scope>PHOSPHORYLATION [LARGE SCALE ANALYSIS] AT SER-370</scope>
    <scope>IDENTIFICATION BY MASS SPECTROMETRY [LARGE SCALE ANALYSIS]</scope>
    <source>
        <tissue>Brain</tissue>
    </source>
</reference>
<reference key="6">
    <citation type="journal article" date="2010" name="J. Clin. Invest.">
        <title>Serotonin receptor 1A-modulated phosphorylation of glycine receptor alpha3 controls breathing in mice.</title>
        <authorList>
            <person name="Manzke T."/>
            <person name="Niebert M."/>
            <person name="Koch U.R."/>
            <person name="Caley A."/>
            <person name="Vogelgesang S."/>
            <person name="Huelsmann S."/>
            <person name="Ponimaskin E."/>
            <person name="Mueller U."/>
            <person name="Smart T.G."/>
            <person name="Harvey R.J."/>
            <person name="Richter D.W."/>
        </authorList>
    </citation>
    <scope>FUNCTION</scope>
    <scope>TRANSPORTER ACTIVITY</scope>
    <scope>DISRUPTION PHENOTYPE</scope>
    <scope>PHOSPHORYLATION AT SER-379</scope>
    <scope>TISSUE SPECIFICITY</scope>
</reference>
<organism>
    <name type="scientific">Mus musculus</name>
    <name type="common">Mouse</name>
    <dbReference type="NCBI Taxonomy" id="10090"/>
    <lineage>
        <taxon>Eukaryota</taxon>
        <taxon>Metazoa</taxon>
        <taxon>Chordata</taxon>
        <taxon>Craniata</taxon>
        <taxon>Vertebrata</taxon>
        <taxon>Euteleostomi</taxon>
        <taxon>Mammalia</taxon>
        <taxon>Eutheria</taxon>
        <taxon>Euarchontoglires</taxon>
        <taxon>Glires</taxon>
        <taxon>Rodentia</taxon>
        <taxon>Myomorpha</taxon>
        <taxon>Muroidea</taxon>
        <taxon>Muridae</taxon>
        <taxon>Murinae</taxon>
        <taxon>Mus</taxon>
        <taxon>Mus</taxon>
    </lineage>
</organism>
<gene>
    <name type="primary">Glra3</name>
</gene>
<protein>
    <recommendedName>
        <fullName>Glycine receptor subunit alpha-3</fullName>
    </recommendedName>
</protein>